<comment type="function">
    <text>Mitochondrial membrane ATP synthase (F(1)F(0) ATP synthase or Complex V) produces ATP from ADP in the presence of a proton gradient across the membrane which is generated by electron transport complexes of the respiratory chain. F-type ATPases consist of two structural domains, F(1) - containing the extramembraneous catalytic core and F(0) - containing the membrane proton channel, linked together by a central stalk and a peripheral stalk. During catalysis, ATP synthesis in the catalytic domain of F(1) is coupled via a rotary mechanism of the central stalk subunits to proton translocation. Key component of the proton channel; it may play a direct role in the translocation of protons across the membrane.</text>
</comment>
<comment type="subunit">
    <text evidence="1">F-type ATPases have 2 components, CF(1) - the catalytic core - and CF(0) - the membrane proton channel. CF(1) has five subunits: alpha(3), beta(3), gamma(1), delta(1), epsilon(1). CF(0) has three main subunits: a, b and c (By similarity).</text>
</comment>
<comment type="subcellular location">
    <subcellularLocation>
        <location>Mitochondrion inner membrane</location>
        <topology>Multi-pass membrane protein</topology>
    </subcellularLocation>
</comment>
<comment type="similarity">
    <text evidence="3">Belongs to the ATPase A chain family.</text>
</comment>
<name>ATP6_PATPE</name>
<gene>
    <name type="primary">ATP6</name>
</gene>
<accession>Q33823</accession>
<proteinExistence type="inferred from homology"/>
<dbReference type="EMBL" id="D16387">
    <property type="protein sequence ID" value="BAA03884.1"/>
    <property type="molecule type" value="Genomic_DNA"/>
</dbReference>
<dbReference type="PIR" id="S70601">
    <property type="entry name" value="S70601"/>
</dbReference>
<dbReference type="RefSeq" id="NP_008172.1">
    <property type="nucleotide sequence ID" value="NC_001627.1"/>
</dbReference>
<dbReference type="SMR" id="Q33823"/>
<dbReference type="GeneID" id="807819"/>
<dbReference type="CTD" id="4508"/>
<dbReference type="GO" id="GO:0005743">
    <property type="term" value="C:mitochondrial inner membrane"/>
    <property type="evidence" value="ECO:0007669"/>
    <property type="project" value="UniProtKB-SubCell"/>
</dbReference>
<dbReference type="GO" id="GO:0045259">
    <property type="term" value="C:proton-transporting ATP synthase complex"/>
    <property type="evidence" value="ECO:0007669"/>
    <property type="project" value="UniProtKB-KW"/>
</dbReference>
<dbReference type="GO" id="GO:0046933">
    <property type="term" value="F:proton-transporting ATP synthase activity, rotational mechanism"/>
    <property type="evidence" value="ECO:0007669"/>
    <property type="project" value="TreeGrafter"/>
</dbReference>
<dbReference type="CDD" id="cd00310">
    <property type="entry name" value="ATP-synt_Fo_a_6"/>
    <property type="match status" value="1"/>
</dbReference>
<dbReference type="Gene3D" id="1.20.120.220">
    <property type="entry name" value="ATP synthase, F0 complex, subunit A"/>
    <property type="match status" value="1"/>
</dbReference>
<dbReference type="InterPro" id="IPR000568">
    <property type="entry name" value="ATP_synth_F0_asu"/>
</dbReference>
<dbReference type="InterPro" id="IPR023011">
    <property type="entry name" value="ATP_synth_F0_asu_AS"/>
</dbReference>
<dbReference type="InterPro" id="IPR045083">
    <property type="entry name" value="ATP_synth_F0_asu_bact/mt"/>
</dbReference>
<dbReference type="InterPro" id="IPR035908">
    <property type="entry name" value="F0_ATP_A_sf"/>
</dbReference>
<dbReference type="NCBIfam" id="TIGR01131">
    <property type="entry name" value="ATP_synt_6_or_A"/>
    <property type="match status" value="1"/>
</dbReference>
<dbReference type="PANTHER" id="PTHR11410">
    <property type="entry name" value="ATP SYNTHASE SUBUNIT A"/>
    <property type="match status" value="1"/>
</dbReference>
<dbReference type="PANTHER" id="PTHR11410:SF0">
    <property type="entry name" value="ATP SYNTHASE SUBUNIT A"/>
    <property type="match status" value="1"/>
</dbReference>
<dbReference type="Pfam" id="PF00119">
    <property type="entry name" value="ATP-synt_A"/>
    <property type="match status" value="1"/>
</dbReference>
<dbReference type="PRINTS" id="PR00123">
    <property type="entry name" value="ATPASEA"/>
</dbReference>
<dbReference type="SUPFAM" id="SSF81336">
    <property type="entry name" value="F1F0 ATP synthase subunit A"/>
    <property type="match status" value="1"/>
</dbReference>
<dbReference type="PROSITE" id="PS00449">
    <property type="entry name" value="ATPASE_A"/>
    <property type="match status" value="1"/>
</dbReference>
<geneLocation type="mitochondrion"/>
<evidence type="ECO:0000250" key="1"/>
<evidence type="ECO:0000255" key="2"/>
<evidence type="ECO:0000305" key="3"/>
<organism>
    <name type="scientific">Patiria pectinifera</name>
    <name type="common">Starfish</name>
    <name type="synonym">Asterina pectinifera</name>
    <dbReference type="NCBI Taxonomy" id="7594"/>
    <lineage>
        <taxon>Eukaryota</taxon>
        <taxon>Metazoa</taxon>
        <taxon>Echinodermata</taxon>
        <taxon>Eleutherozoa</taxon>
        <taxon>Asterozoa</taxon>
        <taxon>Asteroidea</taxon>
        <taxon>Valvatacea</taxon>
        <taxon>Valvatida</taxon>
        <taxon>Asterinidae</taxon>
        <taxon>Patiria</taxon>
    </lineage>
</organism>
<reference key="1">
    <citation type="journal article" date="1995" name="Genetics">
        <title>Nucleotide sequence and gene organization of the starfish Asterina pectinifera mitochondrial genome.</title>
        <authorList>
            <person name="Asakawa S."/>
            <person name="Himeno H."/>
            <person name="Miura K."/>
            <person name="Watanabe K."/>
        </authorList>
    </citation>
    <scope>NUCLEOTIDE SEQUENCE [GENOMIC DNA]</scope>
    <source>
        <tissue>Ovary</tissue>
    </source>
</reference>
<feature type="chain" id="PRO_0000082091" description="ATP synthase subunit a">
    <location>
        <begin position="1"/>
        <end position="230"/>
    </location>
</feature>
<feature type="transmembrane region" description="Helical" evidence="2">
    <location>
        <begin position="16"/>
        <end position="36"/>
    </location>
</feature>
<feature type="transmembrane region" description="Helical" evidence="2">
    <location>
        <begin position="73"/>
        <end position="93"/>
    </location>
</feature>
<feature type="transmembrane region" description="Helical" evidence="2">
    <location>
        <begin position="106"/>
        <end position="126"/>
    </location>
</feature>
<feature type="transmembrane region" description="Helical" evidence="2">
    <location>
        <begin position="142"/>
        <end position="162"/>
    </location>
</feature>
<feature type="transmembrane region" description="Helical" evidence="2">
    <location>
        <begin position="165"/>
        <end position="185"/>
    </location>
</feature>
<feature type="transmembrane region" description="Helical" evidence="2">
    <location>
        <begin position="192"/>
        <end position="212"/>
    </location>
</feature>
<sequence length="230" mass="25506">MNLNLNSIFGQFSPDLVLFIPMTLTAVFLNLSWLSISNPSNWLPSRANLLILSFYQEVLKILFQQTNPNTAPWVSAFTAIFILIFSINVLGLLPYAFTSTSHISLTYSIGVPLWMSVNILGFYLAFNSRLGHLVPQGTPSYLIPFMVIIETISLFAQPIALGLRLAANLTAGHLLIFLLSTAIWTLSSSPSIASITLLIFFFLFLLEIGVACIQAYVFTALVNFYLSQNL</sequence>
<protein>
    <recommendedName>
        <fullName>ATP synthase subunit a</fullName>
    </recommendedName>
    <alternativeName>
        <fullName>F-ATPase protein 6</fullName>
    </alternativeName>
</protein>
<keyword id="KW-0066">ATP synthesis</keyword>
<keyword id="KW-0138">CF(0)</keyword>
<keyword id="KW-0375">Hydrogen ion transport</keyword>
<keyword id="KW-0406">Ion transport</keyword>
<keyword id="KW-0472">Membrane</keyword>
<keyword id="KW-0496">Mitochondrion</keyword>
<keyword id="KW-0999">Mitochondrion inner membrane</keyword>
<keyword id="KW-0812">Transmembrane</keyword>
<keyword id="KW-1133">Transmembrane helix</keyword>
<keyword id="KW-0813">Transport</keyword>